<name>SYC_PARM1</name>
<proteinExistence type="inferred from homology"/>
<organism>
    <name type="scientific">Paramagnetospirillum magneticum (strain ATCC 700264 / AMB-1)</name>
    <name type="common">Magnetospirillum magneticum</name>
    <dbReference type="NCBI Taxonomy" id="342108"/>
    <lineage>
        <taxon>Bacteria</taxon>
        <taxon>Pseudomonadati</taxon>
        <taxon>Pseudomonadota</taxon>
        <taxon>Alphaproteobacteria</taxon>
        <taxon>Rhodospirillales</taxon>
        <taxon>Magnetospirillaceae</taxon>
        <taxon>Paramagnetospirillum</taxon>
    </lineage>
</organism>
<comment type="catalytic activity">
    <reaction evidence="1">
        <text>tRNA(Cys) + L-cysteine + ATP = L-cysteinyl-tRNA(Cys) + AMP + diphosphate</text>
        <dbReference type="Rhea" id="RHEA:17773"/>
        <dbReference type="Rhea" id="RHEA-COMP:9661"/>
        <dbReference type="Rhea" id="RHEA-COMP:9679"/>
        <dbReference type="ChEBI" id="CHEBI:30616"/>
        <dbReference type="ChEBI" id="CHEBI:33019"/>
        <dbReference type="ChEBI" id="CHEBI:35235"/>
        <dbReference type="ChEBI" id="CHEBI:78442"/>
        <dbReference type="ChEBI" id="CHEBI:78517"/>
        <dbReference type="ChEBI" id="CHEBI:456215"/>
        <dbReference type="EC" id="6.1.1.16"/>
    </reaction>
</comment>
<comment type="cofactor">
    <cofactor evidence="1">
        <name>Zn(2+)</name>
        <dbReference type="ChEBI" id="CHEBI:29105"/>
    </cofactor>
    <text evidence="1">Binds 1 zinc ion per subunit.</text>
</comment>
<comment type="subunit">
    <text evidence="1">Monomer.</text>
</comment>
<comment type="subcellular location">
    <subcellularLocation>
        <location evidence="1">Cytoplasm</location>
    </subcellularLocation>
</comment>
<comment type="similarity">
    <text evidence="1">Belongs to the class-I aminoacyl-tRNA synthetase family.</text>
</comment>
<protein>
    <recommendedName>
        <fullName evidence="1">Cysteine--tRNA ligase</fullName>
        <ecNumber evidence="1">6.1.1.16</ecNumber>
    </recommendedName>
    <alternativeName>
        <fullName evidence="1">Cysteinyl-tRNA synthetase</fullName>
        <shortName evidence="1">CysRS</shortName>
    </alternativeName>
</protein>
<gene>
    <name evidence="1" type="primary">cysS</name>
    <name type="ordered locus">amb1236</name>
</gene>
<sequence>MPLVLYNTLTRTKDVFEPLVPGHVGMYVCGPTVYDRAHIGNARPVIVFDVLYRLLKTLYPSVRYVRNITDVDDKINARAKESGEPISAITERTTAMFHEDIGALNCLLPDVEPRATAHITQMIAMIERLIAKGFAYAAEGHVLFAVGAMADYGALSRRSSDEMIAGARVEVAPYKKDPGDFVLWKPSSDDLPGWDSPWGRGRPGWHIECSAMSLQHLGETFDIHGGGQDLVFPHHENEIAQSTCANGKPFARFWLHNGWLMVEGEKMSKSLGNFFTVRDLLDQAPGEAIRLAMLTTHYHQPFDWTADGLKQAKATLDRLYTALRGVADIDANGYEGEAPLEVLAALKDDLNTPLAISHLHELAGALNKATGLEDKARRKGALLASGHLLGLLYQDPEAWFKGTGAADGPSDAEIEAAITARAEARKSRNFAEADRIRQDLAARGVVLEDGAGGTTWKRG</sequence>
<feature type="chain" id="PRO_0000240921" description="Cysteine--tRNA ligase">
    <location>
        <begin position="1"/>
        <end position="459"/>
    </location>
</feature>
<feature type="short sequence motif" description="'HIGH' region">
    <location>
        <begin position="31"/>
        <end position="41"/>
    </location>
</feature>
<feature type="short sequence motif" description="'KMSKS' region">
    <location>
        <begin position="266"/>
        <end position="270"/>
    </location>
</feature>
<feature type="binding site" evidence="1">
    <location>
        <position position="29"/>
    </location>
    <ligand>
        <name>Zn(2+)</name>
        <dbReference type="ChEBI" id="CHEBI:29105"/>
    </ligand>
</feature>
<feature type="binding site" evidence="1">
    <location>
        <position position="209"/>
    </location>
    <ligand>
        <name>Zn(2+)</name>
        <dbReference type="ChEBI" id="CHEBI:29105"/>
    </ligand>
</feature>
<feature type="binding site" evidence="1">
    <location>
        <position position="234"/>
    </location>
    <ligand>
        <name>Zn(2+)</name>
        <dbReference type="ChEBI" id="CHEBI:29105"/>
    </ligand>
</feature>
<feature type="binding site" evidence="1">
    <location>
        <position position="238"/>
    </location>
    <ligand>
        <name>Zn(2+)</name>
        <dbReference type="ChEBI" id="CHEBI:29105"/>
    </ligand>
</feature>
<feature type="binding site" evidence="1">
    <location>
        <position position="269"/>
    </location>
    <ligand>
        <name>ATP</name>
        <dbReference type="ChEBI" id="CHEBI:30616"/>
    </ligand>
</feature>
<keyword id="KW-0030">Aminoacyl-tRNA synthetase</keyword>
<keyword id="KW-0067">ATP-binding</keyword>
<keyword id="KW-0963">Cytoplasm</keyword>
<keyword id="KW-0436">Ligase</keyword>
<keyword id="KW-0479">Metal-binding</keyword>
<keyword id="KW-0547">Nucleotide-binding</keyword>
<keyword id="KW-0648">Protein biosynthesis</keyword>
<keyword id="KW-0862">Zinc</keyword>
<accession>Q2W7Y5</accession>
<evidence type="ECO:0000255" key="1">
    <source>
        <dbReference type="HAMAP-Rule" id="MF_00041"/>
    </source>
</evidence>
<reference key="1">
    <citation type="journal article" date="2005" name="DNA Res.">
        <title>Complete genome sequence of the facultative anaerobic magnetotactic bacterium Magnetospirillum sp. strain AMB-1.</title>
        <authorList>
            <person name="Matsunaga T."/>
            <person name="Okamura Y."/>
            <person name="Fukuda Y."/>
            <person name="Wahyudi A.T."/>
            <person name="Murase Y."/>
            <person name="Takeyama H."/>
        </authorList>
    </citation>
    <scope>NUCLEOTIDE SEQUENCE [LARGE SCALE GENOMIC DNA]</scope>
    <source>
        <strain>ATCC 700264 / AMB-1</strain>
    </source>
</reference>
<dbReference type="EC" id="6.1.1.16" evidence="1"/>
<dbReference type="EMBL" id="AP007255">
    <property type="protein sequence ID" value="BAE50040.1"/>
    <property type="molecule type" value="Genomic_DNA"/>
</dbReference>
<dbReference type="RefSeq" id="WP_011383648.1">
    <property type="nucleotide sequence ID" value="NC_007626.1"/>
</dbReference>
<dbReference type="SMR" id="Q2W7Y5"/>
<dbReference type="STRING" id="342108.amb1236"/>
<dbReference type="KEGG" id="mag:amb1236"/>
<dbReference type="HOGENOM" id="CLU_013528_0_1_5"/>
<dbReference type="OrthoDB" id="9815130at2"/>
<dbReference type="Proteomes" id="UP000007058">
    <property type="component" value="Chromosome"/>
</dbReference>
<dbReference type="GO" id="GO:0005829">
    <property type="term" value="C:cytosol"/>
    <property type="evidence" value="ECO:0007669"/>
    <property type="project" value="TreeGrafter"/>
</dbReference>
<dbReference type="GO" id="GO:0005524">
    <property type="term" value="F:ATP binding"/>
    <property type="evidence" value="ECO:0007669"/>
    <property type="project" value="UniProtKB-UniRule"/>
</dbReference>
<dbReference type="GO" id="GO:0004817">
    <property type="term" value="F:cysteine-tRNA ligase activity"/>
    <property type="evidence" value="ECO:0007669"/>
    <property type="project" value="UniProtKB-UniRule"/>
</dbReference>
<dbReference type="GO" id="GO:0008270">
    <property type="term" value="F:zinc ion binding"/>
    <property type="evidence" value="ECO:0007669"/>
    <property type="project" value="UniProtKB-UniRule"/>
</dbReference>
<dbReference type="GO" id="GO:0006423">
    <property type="term" value="P:cysteinyl-tRNA aminoacylation"/>
    <property type="evidence" value="ECO:0007669"/>
    <property type="project" value="UniProtKB-UniRule"/>
</dbReference>
<dbReference type="CDD" id="cd07963">
    <property type="entry name" value="Anticodon_Ia_Cys"/>
    <property type="match status" value="1"/>
</dbReference>
<dbReference type="CDD" id="cd00672">
    <property type="entry name" value="CysRS_core"/>
    <property type="match status" value="1"/>
</dbReference>
<dbReference type="FunFam" id="3.40.50.620:FF:000009">
    <property type="entry name" value="Cysteine--tRNA ligase"/>
    <property type="match status" value="1"/>
</dbReference>
<dbReference type="Gene3D" id="1.20.120.1910">
    <property type="entry name" value="Cysteine-tRNA ligase, C-terminal anti-codon recognition domain"/>
    <property type="match status" value="1"/>
</dbReference>
<dbReference type="Gene3D" id="3.40.50.620">
    <property type="entry name" value="HUPs"/>
    <property type="match status" value="1"/>
</dbReference>
<dbReference type="HAMAP" id="MF_00041">
    <property type="entry name" value="Cys_tRNA_synth"/>
    <property type="match status" value="1"/>
</dbReference>
<dbReference type="InterPro" id="IPR015803">
    <property type="entry name" value="Cys-tRNA-ligase"/>
</dbReference>
<dbReference type="InterPro" id="IPR015273">
    <property type="entry name" value="Cys-tRNA-synt_Ia_DALR"/>
</dbReference>
<dbReference type="InterPro" id="IPR024909">
    <property type="entry name" value="Cys-tRNA/MSH_ligase"/>
</dbReference>
<dbReference type="InterPro" id="IPR056411">
    <property type="entry name" value="CysS_C"/>
</dbReference>
<dbReference type="InterPro" id="IPR014729">
    <property type="entry name" value="Rossmann-like_a/b/a_fold"/>
</dbReference>
<dbReference type="InterPro" id="IPR032678">
    <property type="entry name" value="tRNA-synt_1_cat_dom"/>
</dbReference>
<dbReference type="InterPro" id="IPR009080">
    <property type="entry name" value="tRNAsynth_Ia_anticodon-bd"/>
</dbReference>
<dbReference type="NCBIfam" id="TIGR00435">
    <property type="entry name" value="cysS"/>
    <property type="match status" value="1"/>
</dbReference>
<dbReference type="PANTHER" id="PTHR10890:SF3">
    <property type="entry name" value="CYSTEINE--TRNA LIGASE, CYTOPLASMIC"/>
    <property type="match status" value="1"/>
</dbReference>
<dbReference type="PANTHER" id="PTHR10890">
    <property type="entry name" value="CYSTEINYL-TRNA SYNTHETASE"/>
    <property type="match status" value="1"/>
</dbReference>
<dbReference type="Pfam" id="PF23493">
    <property type="entry name" value="CysS_C"/>
    <property type="match status" value="1"/>
</dbReference>
<dbReference type="Pfam" id="PF09190">
    <property type="entry name" value="DALR_2"/>
    <property type="match status" value="1"/>
</dbReference>
<dbReference type="Pfam" id="PF01406">
    <property type="entry name" value="tRNA-synt_1e"/>
    <property type="match status" value="1"/>
</dbReference>
<dbReference type="PRINTS" id="PR00983">
    <property type="entry name" value="TRNASYNTHCYS"/>
</dbReference>
<dbReference type="SMART" id="SM00840">
    <property type="entry name" value="DALR_2"/>
    <property type="match status" value="1"/>
</dbReference>
<dbReference type="SUPFAM" id="SSF47323">
    <property type="entry name" value="Anticodon-binding domain of a subclass of class I aminoacyl-tRNA synthetases"/>
    <property type="match status" value="1"/>
</dbReference>
<dbReference type="SUPFAM" id="SSF52374">
    <property type="entry name" value="Nucleotidylyl transferase"/>
    <property type="match status" value="1"/>
</dbReference>